<organism>
    <name type="scientific">Pseudoalteromonas atlantica (strain T6c / ATCC BAA-1087)</name>
    <dbReference type="NCBI Taxonomy" id="3042615"/>
    <lineage>
        <taxon>Bacteria</taxon>
        <taxon>Pseudomonadati</taxon>
        <taxon>Pseudomonadota</taxon>
        <taxon>Gammaproteobacteria</taxon>
        <taxon>Alteromonadales</taxon>
        <taxon>Alteromonadaceae</taxon>
        <taxon>Paraglaciecola</taxon>
    </lineage>
</organism>
<accession>Q15VG2</accession>
<sequence length="263" mass="29769">MRIALGVEYDGARFHGWQRQNEVISVQQHLEEALTRIANEPIRVVCAGRTDAGVHATGQVVHFETTSQRPDRAWTLGINTYLPDTISVRWVKAVPEDFHARFSATARRYRYIIYNNTLRSGILANGVTHIYGDLDHELMHEAAQKLVGKHDFSSFRAVNCQAKTATRTMSHIRVKRMGDYIVIDVQANAFLHHMVRNITGTLVAIGHKEKPVEWVDELLEVKDRTKAGITALPNGLYLVHVTYPETFALPKLKMGPLFLADDF</sequence>
<dbReference type="EC" id="5.4.99.12" evidence="1"/>
<dbReference type="EMBL" id="CP000388">
    <property type="protein sequence ID" value="ABG40126.1"/>
    <property type="molecule type" value="Genomic_DNA"/>
</dbReference>
<dbReference type="RefSeq" id="WP_011574435.1">
    <property type="nucleotide sequence ID" value="NC_008228.1"/>
</dbReference>
<dbReference type="SMR" id="Q15VG2"/>
<dbReference type="STRING" id="342610.Patl_1604"/>
<dbReference type="KEGG" id="pat:Patl_1604"/>
<dbReference type="eggNOG" id="COG0101">
    <property type="taxonomic scope" value="Bacteria"/>
</dbReference>
<dbReference type="HOGENOM" id="CLU_014673_0_2_6"/>
<dbReference type="OrthoDB" id="9811823at2"/>
<dbReference type="Proteomes" id="UP000001981">
    <property type="component" value="Chromosome"/>
</dbReference>
<dbReference type="GO" id="GO:0003723">
    <property type="term" value="F:RNA binding"/>
    <property type="evidence" value="ECO:0007669"/>
    <property type="project" value="InterPro"/>
</dbReference>
<dbReference type="GO" id="GO:0160147">
    <property type="term" value="F:tRNA pseudouridine(38-40) synthase activity"/>
    <property type="evidence" value="ECO:0007669"/>
    <property type="project" value="UniProtKB-EC"/>
</dbReference>
<dbReference type="GO" id="GO:0031119">
    <property type="term" value="P:tRNA pseudouridine synthesis"/>
    <property type="evidence" value="ECO:0007669"/>
    <property type="project" value="UniProtKB-UniRule"/>
</dbReference>
<dbReference type="CDD" id="cd02570">
    <property type="entry name" value="PseudoU_synth_EcTruA"/>
    <property type="match status" value="1"/>
</dbReference>
<dbReference type="FunFam" id="3.30.70.580:FF:000001">
    <property type="entry name" value="tRNA pseudouridine synthase A"/>
    <property type="match status" value="1"/>
</dbReference>
<dbReference type="Gene3D" id="3.30.70.660">
    <property type="entry name" value="Pseudouridine synthase I, catalytic domain, C-terminal subdomain"/>
    <property type="match status" value="1"/>
</dbReference>
<dbReference type="Gene3D" id="3.30.70.580">
    <property type="entry name" value="Pseudouridine synthase I, catalytic domain, N-terminal subdomain"/>
    <property type="match status" value="1"/>
</dbReference>
<dbReference type="HAMAP" id="MF_00171">
    <property type="entry name" value="TruA"/>
    <property type="match status" value="1"/>
</dbReference>
<dbReference type="InterPro" id="IPR020103">
    <property type="entry name" value="PsdUridine_synth_cat_dom_sf"/>
</dbReference>
<dbReference type="InterPro" id="IPR001406">
    <property type="entry name" value="PsdUridine_synth_TruA"/>
</dbReference>
<dbReference type="InterPro" id="IPR020097">
    <property type="entry name" value="PsdUridine_synth_TruA_a/b_dom"/>
</dbReference>
<dbReference type="InterPro" id="IPR020095">
    <property type="entry name" value="PsdUridine_synth_TruA_C"/>
</dbReference>
<dbReference type="InterPro" id="IPR020094">
    <property type="entry name" value="TruA/RsuA/RluB/E/F_N"/>
</dbReference>
<dbReference type="NCBIfam" id="TIGR00071">
    <property type="entry name" value="hisT_truA"/>
    <property type="match status" value="1"/>
</dbReference>
<dbReference type="PANTHER" id="PTHR11142">
    <property type="entry name" value="PSEUDOURIDYLATE SYNTHASE"/>
    <property type="match status" value="1"/>
</dbReference>
<dbReference type="PANTHER" id="PTHR11142:SF0">
    <property type="entry name" value="TRNA PSEUDOURIDINE SYNTHASE-LIKE 1"/>
    <property type="match status" value="1"/>
</dbReference>
<dbReference type="Pfam" id="PF01416">
    <property type="entry name" value="PseudoU_synth_1"/>
    <property type="match status" value="2"/>
</dbReference>
<dbReference type="PIRSF" id="PIRSF001430">
    <property type="entry name" value="tRNA_psdUrid_synth"/>
    <property type="match status" value="1"/>
</dbReference>
<dbReference type="SUPFAM" id="SSF55120">
    <property type="entry name" value="Pseudouridine synthase"/>
    <property type="match status" value="1"/>
</dbReference>
<comment type="function">
    <text evidence="1">Formation of pseudouridine at positions 38, 39 and 40 in the anticodon stem and loop of transfer RNAs.</text>
</comment>
<comment type="catalytic activity">
    <reaction evidence="1">
        <text>uridine(38/39/40) in tRNA = pseudouridine(38/39/40) in tRNA</text>
        <dbReference type="Rhea" id="RHEA:22376"/>
        <dbReference type="Rhea" id="RHEA-COMP:10085"/>
        <dbReference type="Rhea" id="RHEA-COMP:10087"/>
        <dbReference type="ChEBI" id="CHEBI:65314"/>
        <dbReference type="ChEBI" id="CHEBI:65315"/>
        <dbReference type="EC" id="5.4.99.12"/>
    </reaction>
</comment>
<comment type="subunit">
    <text evidence="1">Homodimer.</text>
</comment>
<comment type="similarity">
    <text evidence="1">Belongs to the tRNA pseudouridine synthase TruA family.</text>
</comment>
<gene>
    <name evidence="1" type="primary">truA</name>
    <name type="ordered locus">Patl_1604</name>
</gene>
<protein>
    <recommendedName>
        <fullName evidence="1">tRNA pseudouridine synthase A</fullName>
        <ecNumber evidence="1">5.4.99.12</ecNumber>
    </recommendedName>
    <alternativeName>
        <fullName evidence="1">tRNA pseudouridine(38-40) synthase</fullName>
    </alternativeName>
    <alternativeName>
        <fullName evidence="1">tRNA pseudouridylate synthase I</fullName>
    </alternativeName>
    <alternativeName>
        <fullName evidence="1">tRNA-uridine isomerase I</fullName>
    </alternativeName>
</protein>
<keyword id="KW-0413">Isomerase</keyword>
<keyword id="KW-0819">tRNA processing</keyword>
<feature type="chain" id="PRO_1000017141" description="tRNA pseudouridine synthase A">
    <location>
        <begin position="1"/>
        <end position="263"/>
    </location>
</feature>
<feature type="active site" description="Nucleophile" evidence="1">
    <location>
        <position position="51"/>
    </location>
</feature>
<feature type="binding site" evidence="1">
    <location>
        <position position="109"/>
    </location>
    <ligand>
        <name>substrate</name>
    </ligand>
</feature>
<evidence type="ECO:0000255" key="1">
    <source>
        <dbReference type="HAMAP-Rule" id="MF_00171"/>
    </source>
</evidence>
<name>TRUA_PSEA6</name>
<reference key="1">
    <citation type="submission" date="2006-06" db="EMBL/GenBank/DDBJ databases">
        <title>Complete sequence of Pseudoalteromonas atlantica T6c.</title>
        <authorList>
            <consortium name="US DOE Joint Genome Institute"/>
            <person name="Copeland A."/>
            <person name="Lucas S."/>
            <person name="Lapidus A."/>
            <person name="Barry K."/>
            <person name="Detter J.C."/>
            <person name="Glavina del Rio T."/>
            <person name="Hammon N."/>
            <person name="Israni S."/>
            <person name="Dalin E."/>
            <person name="Tice H."/>
            <person name="Pitluck S."/>
            <person name="Saunders E."/>
            <person name="Brettin T."/>
            <person name="Bruce D."/>
            <person name="Han C."/>
            <person name="Tapia R."/>
            <person name="Gilna P."/>
            <person name="Schmutz J."/>
            <person name="Larimer F."/>
            <person name="Land M."/>
            <person name="Hauser L."/>
            <person name="Kyrpides N."/>
            <person name="Kim E."/>
            <person name="Karls A.C."/>
            <person name="Bartlett D."/>
            <person name="Higgins B.P."/>
            <person name="Richardson P."/>
        </authorList>
    </citation>
    <scope>NUCLEOTIDE SEQUENCE [LARGE SCALE GENOMIC DNA]</scope>
    <source>
        <strain>T6c / ATCC BAA-1087</strain>
    </source>
</reference>
<proteinExistence type="inferred from homology"/>